<sequence>MPFGEYPYTIDDKGRVVIPPAFREFVEDGMILTRGMEGCLYVFPLASWRRVEEQLEGLPITDAGSRAFVRFFYSGANKARLDNQSRVSVPQTLRAFAQLDGDVIVAGAPGRLELWNPERWAAAIQAVQQDPPNPELLANFVA</sequence>
<comment type="subunit">
    <text evidence="1">Forms oligomers.</text>
</comment>
<comment type="subcellular location">
    <subcellularLocation>
        <location evidence="1">Cytoplasm</location>
        <location evidence="1">Nucleoid</location>
    </subcellularLocation>
</comment>
<comment type="similarity">
    <text evidence="1">Belongs to the MraZ family.</text>
</comment>
<evidence type="ECO:0000255" key="1">
    <source>
        <dbReference type="HAMAP-Rule" id="MF_01008"/>
    </source>
</evidence>
<evidence type="ECO:0000255" key="2">
    <source>
        <dbReference type="PROSITE-ProRule" id="PRU01076"/>
    </source>
</evidence>
<protein>
    <recommendedName>
        <fullName>Transcriptional regulator MraZ</fullName>
    </recommendedName>
</protein>
<accession>Q1J0B7</accession>
<dbReference type="EMBL" id="CP000359">
    <property type="protein sequence ID" value="ABF45067.1"/>
    <property type="molecule type" value="Genomic_DNA"/>
</dbReference>
<dbReference type="RefSeq" id="WP_011529908.1">
    <property type="nucleotide sequence ID" value="NC_008025.1"/>
</dbReference>
<dbReference type="SMR" id="Q1J0B7"/>
<dbReference type="STRING" id="319795.Dgeo_0765"/>
<dbReference type="KEGG" id="dge:Dgeo_0765"/>
<dbReference type="eggNOG" id="COG2001">
    <property type="taxonomic scope" value="Bacteria"/>
</dbReference>
<dbReference type="HOGENOM" id="CLU_107907_0_3_0"/>
<dbReference type="Proteomes" id="UP000002431">
    <property type="component" value="Chromosome"/>
</dbReference>
<dbReference type="GO" id="GO:0005737">
    <property type="term" value="C:cytoplasm"/>
    <property type="evidence" value="ECO:0007669"/>
    <property type="project" value="UniProtKB-UniRule"/>
</dbReference>
<dbReference type="GO" id="GO:0009295">
    <property type="term" value="C:nucleoid"/>
    <property type="evidence" value="ECO:0007669"/>
    <property type="project" value="UniProtKB-SubCell"/>
</dbReference>
<dbReference type="GO" id="GO:0003700">
    <property type="term" value="F:DNA-binding transcription factor activity"/>
    <property type="evidence" value="ECO:0007669"/>
    <property type="project" value="UniProtKB-UniRule"/>
</dbReference>
<dbReference type="GO" id="GO:0000976">
    <property type="term" value="F:transcription cis-regulatory region binding"/>
    <property type="evidence" value="ECO:0007669"/>
    <property type="project" value="TreeGrafter"/>
</dbReference>
<dbReference type="GO" id="GO:2000143">
    <property type="term" value="P:negative regulation of DNA-templated transcription initiation"/>
    <property type="evidence" value="ECO:0007669"/>
    <property type="project" value="TreeGrafter"/>
</dbReference>
<dbReference type="CDD" id="cd16321">
    <property type="entry name" value="MraZ_C"/>
    <property type="match status" value="1"/>
</dbReference>
<dbReference type="CDD" id="cd16320">
    <property type="entry name" value="MraZ_N"/>
    <property type="match status" value="1"/>
</dbReference>
<dbReference type="Gene3D" id="3.40.1550.20">
    <property type="entry name" value="Transcriptional regulator MraZ domain"/>
    <property type="match status" value="1"/>
</dbReference>
<dbReference type="HAMAP" id="MF_01008">
    <property type="entry name" value="MraZ"/>
    <property type="match status" value="1"/>
</dbReference>
<dbReference type="InterPro" id="IPR003444">
    <property type="entry name" value="MraZ"/>
</dbReference>
<dbReference type="InterPro" id="IPR035644">
    <property type="entry name" value="MraZ_C"/>
</dbReference>
<dbReference type="InterPro" id="IPR020603">
    <property type="entry name" value="MraZ_dom"/>
</dbReference>
<dbReference type="InterPro" id="IPR035642">
    <property type="entry name" value="MraZ_N"/>
</dbReference>
<dbReference type="InterPro" id="IPR038619">
    <property type="entry name" value="MraZ_sf"/>
</dbReference>
<dbReference type="InterPro" id="IPR007159">
    <property type="entry name" value="SpoVT-AbrB_dom"/>
</dbReference>
<dbReference type="InterPro" id="IPR037914">
    <property type="entry name" value="SpoVT-AbrB_sf"/>
</dbReference>
<dbReference type="NCBIfam" id="TIGR00242">
    <property type="entry name" value="division/cell wall cluster transcriptional repressor MraZ"/>
    <property type="match status" value="1"/>
</dbReference>
<dbReference type="PANTHER" id="PTHR34701">
    <property type="entry name" value="TRANSCRIPTIONAL REGULATOR MRAZ"/>
    <property type="match status" value="1"/>
</dbReference>
<dbReference type="PANTHER" id="PTHR34701:SF1">
    <property type="entry name" value="TRANSCRIPTIONAL REGULATOR MRAZ"/>
    <property type="match status" value="1"/>
</dbReference>
<dbReference type="Pfam" id="PF02381">
    <property type="entry name" value="MraZ"/>
    <property type="match status" value="2"/>
</dbReference>
<dbReference type="SUPFAM" id="SSF89447">
    <property type="entry name" value="AbrB/MazE/MraZ-like"/>
    <property type="match status" value="1"/>
</dbReference>
<dbReference type="PROSITE" id="PS51740">
    <property type="entry name" value="SPOVT_ABRB"/>
    <property type="match status" value="2"/>
</dbReference>
<feature type="chain" id="PRO_1000062868" description="Transcriptional regulator MraZ">
    <location>
        <begin position="1"/>
        <end position="142"/>
    </location>
</feature>
<feature type="domain" description="SpoVT-AbrB 1" evidence="2">
    <location>
        <begin position="5"/>
        <end position="47"/>
    </location>
</feature>
<feature type="domain" description="SpoVT-AbrB 2" evidence="2">
    <location>
        <begin position="76"/>
        <end position="119"/>
    </location>
</feature>
<proteinExistence type="inferred from homology"/>
<gene>
    <name evidence="1" type="primary">mraZ</name>
    <name type="ordered locus">Dgeo_0765</name>
</gene>
<reference key="1">
    <citation type="submission" date="2006-04" db="EMBL/GenBank/DDBJ databases">
        <title>Complete sequence of chromosome of Deinococcus geothermalis DSM 11300.</title>
        <authorList>
            <person name="Copeland A."/>
            <person name="Lucas S."/>
            <person name="Lapidus A."/>
            <person name="Barry K."/>
            <person name="Detter J.C."/>
            <person name="Glavina del Rio T."/>
            <person name="Hammon N."/>
            <person name="Israni S."/>
            <person name="Dalin E."/>
            <person name="Tice H."/>
            <person name="Pitluck S."/>
            <person name="Brettin T."/>
            <person name="Bruce D."/>
            <person name="Han C."/>
            <person name="Tapia R."/>
            <person name="Saunders E."/>
            <person name="Gilna P."/>
            <person name="Schmutz J."/>
            <person name="Larimer F."/>
            <person name="Land M."/>
            <person name="Hauser L."/>
            <person name="Kyrpides N."/>
            <person name="Kim E."/>
            <person name="Daly M.J."/>
            <person name="Fredrickson J.K."/>
            <person name="Makarova K.S."/>
            <person name="Gaidamakova E.K."/>
            <person name="Zhai M."/>
            <person name="Richardson P."/>
        </authorList>
    </citation>
    <scope>NUCLEOTIDE SEQUENCE [LARGE SCALE GENOMIC DNA]</scope>
    <source>
        <strain>DSM 11300 / CIP 105573 / AG-3a</strain>
    </source>
</reference>
<keyword id="KW-0963">Cytoplasm</keyword>
<keyword id="KW-0238">DNA-binding</keyword>
<keyword id="KW-0677">Repeat</keyword>
<keyword id="KW-0804">Transcription</keyword>
<keyword id="KW-0805">Transcription regulation</keyword>
<name>MRAZ_DEIGD</name>
<organism>
    <name type="scientific">Deinococcus geothermalis (strain DSM 11300 / CIP 105573 / AG-3a)</name>
    <dbReference type="NCBI Taxonomy" id="319795"/>
    <lineage>
        <taxon>Bacteria</taxon>
        <taxon>Thermotogati</taxon>
        <taxon>Deinococcota</taxon>
        <taxon>Deinococci</taxon>
        <taxon>Deinococcales</taxon>
        <taxon>Deinococcaceae</taxon>
        <taxon>Deinococcus</taxon>
    </lineage>
</organism>